<gene>
    <name evidence="1" type="primary">rpsB</name>
    <name type="ordered locus">PHZ_c1780</name>
</gene>
<proteinExistence type="inferred from homology"/>
<accession>B4RBZ4</accession>
<comment type="similarity">
    <text evidence="1">Belongs to the universal ribosomal protein uS2 family.</text>
</comment>
<dbReference type="EMBL" id="CP000747">
    <property type="protein sequence ID" value="ACG78191.1"/>
    <property type="molecule type" value="Genomic_DNA"/>
</dbReference>
<dbReference type="RefSeq" id="WP_012522333.1">
    <property type="nucleotide sequence ID" value="NC_011144.1"/>
</dbReference>
<dbReference type="SMR" id="B4RBZ4"/>
<dbReference type="STRING" id="450851.PHZ_c1780"/>
<dbReference type="KEGG" id="pzu:PHZ_c1780"/>
<dbReference type="eggNOG" id="COG0052">
    <property type="taxonomic scope" value="Bacteria"/>
</dbReference>
<dbReference type="HOGENOM" id="CLU_040318_2_2_5"/>
<dbReference type="OrthoDB" id="9808036at2"/>
<dbReference type="Proteomes" id="UP000001868">
    <property type="component" value="Chromosome"/>
</dbReference>
<dbReference type="GO" id="GO:0022627">
    <property type="term" value="C:cytosolic small ribosomal subunit"/>
    <property type="evidence" value="ECO:0007669"/>
    <property type="project" value="TreeGrafter"/>
</dbReference>
<dbReference type="GO" id="GO:0003735">
    <property type="term" value="F:structural constituent of ribosome"/>
    <property type="evidence" value="ECO:0007669"/>
    <property type="project" value="InterPro"/>
</dbReference>
<dbReference type="GO" id="GO:0006412">
    <property type="term" value="P:translation"/>
    <property type="evidence" value="ECO:0007669"/>
    <property type="project" value="UniProtKB-UniRule"/>
</dbReference>
<dbReference type="CDD" id="cd01425">
    <property type="entry name" value="RPS2"/>
    <property type="match status" value="1"/>
</dbReference>
<dbReference type="Gene3D" id="3.40.50.10490">
    <property type="entry name" value="Glucose-6-phosphate isomerase like protein, domain 1"/>
    <property type="match status" value="1"/>
</dbReference>
<dbReference type="Gene3D" id="1.10.287.610">
    <property type="entry name" value="Helix hairpin bin"/>
    <property type="match status" value="1"/>
</dbReference>
<dbReference type="HAMAP" id="MF_00291_B">
    <property type="entry name" value="Ribosomal_uS2_B"/>
    <property type="match status" value="1"/>
</dbReference>
<dbReference type="InterPro" id="IPR001865">
    <property type="entry name" value="Ribosomal_uS2"/>
</dbReference>
<dbReference type="InterPro" id="IPR005706">
    <property type="entry name" value="Ribosomal_uS2_bac/mit/plastid"/>
</dbReference>
<dbReference type="InterPro" id="IPR018130">
    <property type="entry name" value="Ribosomal_uS2_CS"/>
</dbReference>
<dbReference type="InterPro" id="IPR023591">
    <property type="entry name" value="Ribosomal_uS2_flav_dom_sf"/>
</dbReference>
<dbReference type="NCBIfam" id="TIGR01011">
    <property type="entry name" value="rpsB_bact"/>
    <property type="match status" value="1"/>
</dbReference>
<dbReference type="PANTHER" id="PTHR12534">
    <property type="entry name" value="30S RIBOSOMAL PROTEIN S2 PROKARYOTIC AND ORGANELLAR"/>
    <property type="match status" value="1"/>
</dbReference>
<dbReference type="PANTHER" id="PTHR12534:SF0">
    <property type="entry name" value="SMALL RIBOSOMAL SUBUNIT PROTEIN US2M"/>
    <property type="match status" value="1"/>
</dbReference>
<dbReference type="Pfam" id="PF00318">
    <property type="entry name" value="Ribosomal_S2"/>
    <property type="match status" value="1"/>
</dbReference>
<dbReference type="PRINTS" id="PR00395">
    <property type="entry name" value="RIBOSOMALS2"/>
</dbReference>
<dbReference type="SUPFAM" id="SSF52313">
    <property type="entry name" value="Ribosomal protein S2"/>
    <property type="match status" value="1"/>
</dbReference>
<dbReference type="PROSITE" id="PS00962">
    <property type="entry name" value="RIBOSOMAL_S2_1"/>
    <property type="match status" value="1"/>
</dbReference>
<dbReference type="PROSITE" id="PS00963">
    <property type="entry name" value="RIBOSOMAL_S2_2"/>
    <property type="match status" value="1"/>
</dbReference>
<reference key="1">
    <citation type="journal article" date="2008" name="BMC Genomics">
        <title>Complete genome of Phenylobacterium zucineum - a novel facultative intracellular bacterium isolated from human erythroleukemia cell line K562.</title>
        <authorList>
            <person name="Luo Y."/>
            <person name="Xu X."/>
            <person name="Ding Z."/>
            <person name="Liu Z."/>
            <person name="Zhang B."/>
            <person name="Yan Z."/>
            <person name="Sun J."/>
            <person name="Hu S."/>
            <person name="Hu X."/>
        </authorList>
    </citation>
    <scope>NUCLEOTIDE SEQUENCE [LARGE SCALE GENOMIC DNA]</scope>
    <source>
        <strain>HLK1</strain>
    </source>
</reference>
<feature type="chain" id="PRO_1000115039" description="Small ribosomal subunit protein uS2">
    <location>
        <begin position="1"/>
        <end position="295"/>
    </location>
</feature>
<feature type="region of interest" description="Disordered" evidence="2">
    <location>
        <begin position="242"/>
        <end position="295"/>
    </location>
</feature>
<feature type="compositionally biased region" description="Low complexity" evidence="2">
    <location>
        <begin position="264"/>
        <end position="288"/>
    </location>
</feature>
<name>RS2_PHEZH</name>
<keyword id="KW-1185">Reference proteome</keyword>
<keyword id="KW-0687">Ribonucleoprotein</keyword>
<keyword id="KW-0689">Ribosomal protein</keyword>
<organism>
    <name type="scientific">Phenylobacterium zucineum (strain HLK1)</name>
    <dbReference type="NCBI Taxonomy" id="450851"/>
    <lineage>
        <taxon>Bacteria</taxon>
        <taxon>Pseudomonadati</taxon>
        <taxon>Pseudomonadota</taxon>
        <taxon>Alphaproteobacteria</taxon>
        <taxon>Caulobacterales</taxon>
        <taxon>Caulobacteraceae</taxon>
        <taxon>Phenylobacterium</taxon>
    </lineage>
</organism>
<protein>
    <recommendedName>
        <fullName evidence="1">Small ribosomal subunit protein uS2</fullName>
    </recommendedName>
    <alternativeName>
        <fullName evidence="3">30S ribosomal protein S2</fullName>
    </alternativeName>
</protein>
<sequence>MALPEFSMRQLLEAGAHFGHQTHRWNPKMDKYIFGARSNIHIIDLSQSIPLLHQALVKVREVAAGGGRILFVGTKRQASEPIATAAKRCAQYYVNHRWLGGTLTNWRTVSNSIARLRELESVLGGEGQGRSKKELLQLTRERDKLELSLGGIKDMGGIPDLMFVIDTNKEAIAIQEARKLNIPVIAILDTNCNPDGITYPIPGNDDAARAIQLYCDLMADAILDGLAAGQAASGVDLGASEAPVEPTLARELAPEAPAPEAPAEEAPAAEAAPAAEAAPAAEAAPAEASSEEQAG</sequence>
<evidence type="ECO:0000255" key="1">
    <source>
        <dbReference type="HAMAP-Rule" id="MF_00291"/>
    </source>
</evidence>
<evidence type="ECO:0000256" key="2">
    <source>
        <dbReference type="SAM" id="MobiDB-lite"/>
    </source>
</evidence>
<evidence type="ECO:0000305" key="3"/>